<proteinExistence type="inferred from homology"/>
<reference key="1">
    <citation type="journal article" date="1999" name="Nature">
        <title>Genomic sequence comparison of two unrelated isolates of the human gastric pathogen Helicobacter pylori.</title>
        <authorList>
            <person name="Alm R.A."/>
            <person name="Ling L.-S.L."/>
            <person name="Moir D.T."/>
            <person name="King B.L."/>
            <person name="Brown E.D."/>
            <person name="Doig P.C."/>
            <person name="Smith D.R."/>
            <person name="Noonan B."/>
            <person name="Guild B.C."/>
            <person name="deJonge B.L."/>
            <person name="Carmel G."/>
            <person name="Tummino P.J."/>
            <person name="Caruso A."/>
            <person name="Uria-Nickelsen M."/>
            <person name="Mills D.M."/>
            <person name="Ives C."/>
            <person name="Gibson R."/>
            <person name="Merberg D."/>
            <person name="Mills S.D."/>
            <person name="Jiang Q."/>
            <person name="Taylor D.E."/>
            <person name="Vovis G.F."/>
            <person name="Trust T.J."/>
        </authorList>
    </citation>
    <scope>NUCLEOTIDE SEQUENCE [LARGE SCALE GENOMIC DNA]</scope>
    <source>
        <strain>J99 / ATCC 700824</strain>
    </source>
</reference>
<evidence type="ECO:0000305" key="1"/>
<gene>
    <name type="ordered locus">jhp_0960</name>
</gene>
<dbReference type="EMBL" id="AE001439">
    <property type="protein sequence ID" value="AAD06533.1"/>
    <property type="molecule type" value="Genomic_DNA"/>
</dbReference>
<dbReference type="PIR" id="A71867">
    <property type="entry name" value="A71867"/>
</dbReference>
<dbReference type="RefSeq" id="WP_000906664.1">
    <property type="nucleotide sequence ID" value="NZ_CP011330.1"/>
</dbReference>
<dbReference type="SMR" id="Q9ZKH6"/>
<dbReference type="KEGG" id="hpj:jhp_0960"/>
<dbReference type="PATRIC" id="fig|85963.30.peg.1634"/>
<dbReference type="eggNOG" id="COG1598">
    <property type="taxonomic scope" value="Bacteria"/>
</dbReference>
<dbReference type="Proteomes" id="UP000000804">
    <property type="component" value="Chromosome"/>
</dbReference>
<dbReference type="Gene3D" id="3.30.160.250">
    <property type="match status" value="1"/>
</dbReference>
<dbReference type="InterPro" id="IPR031807">
    <property type="entry name" value="HicB-like"/>
</dbReference>
<dbReference type="InterPro" id="IPR051404">
    <property type="entry name" value="TA_system_antitoxin"/>
</dbReference>
<dbReference type="InterPro" id="IPR035069">
    <property type="entry name" value="TTHA1013/TTHA0281-like"/>
</dbReference>
<dbReference type="PANTHER" id="PTHR34504">
    <property type="entry name" value="ANTITOXIN HICB"/>
    <property type="match status" value="1"/>
</dbReference>
<dbReference type="PANTHER" id="PTHR34504:SF4">
    <property type="entry name" value="ANTITOXIN HICB"/>
    <property type="match status" value="1"/>
</dbReference>
<dbReference type="Pfam" id="PF15919">
    <property type="entry name" value="HicB_lk_antitox"/>
    <property type="match status" value="1"/>
</dbReference>
<dbReference type="SUPFAM" id="SSF143100">
    <property type="entry name" value="TTHA1013/TTHA0281-like"/>
    <property type="match status" value="1"/>
</dbReference>
<feature type="chain" id="PRO_0000157933" description="UPF0150 protein jhp_0960">
    <location>
        <begin position="1"/>
        <end position="72"/>
    </location>
</feature>
<comment type="similarity">
    <text evidence="1">Belongs to the UPF0150 family.</text>
</comment>
<protein>
    <recommendedName>
        <fullName>UPF0150 protein jhp_0960</fullName>
    </recommendedName>
</protein>
<sequence length="72" mass="7999">MLINAVIEKDENGYFAFVPFLKGCVSQGKSYEEALRNIKEAIELYLGDLEADELAFLSKKNSVIAPIEIAFA</sequence>
<organism>
    <name type="scientific">Helicobacter pylori (strain J99 / ATCC 700824)</name>
    <name type="common">Campylobacter pylori J99</name>
    <dbReference type="NCBI Taxonomy" id="85963"/>
    <lineage>
        <taxon>Bacteria</taxon>
        <taxon>Pseudomonadati</taxon>
        <taxon>Campylobacterota</taxon>
        <taxon>Epsilonproteobacteria</taxon>
        <taxon>Campylobacterales</taxon>
        <taxon>Helicobacteraceae</taxon>
        <taxon>Helicobacter</taxon>
    </lineage>
</organism>
<accession>Q9ZKH6</accession>
<name>Y960_HELPJ</name>